<organism>
    <name type="scientific">Bothrops fonsecai</name>
    <name type="common">Fonseca's lancehead</name>
    <name type="synonym">Rhinocerophis fonsecai</name>
    <dbReference type="NCBI Taxonomy" id="157549"/>
    <lineage>
        <taxon>Eukaryota</taxon>
        <taxon>Metazoa</taxon>
        <taxon>Chordata</taxon>
        <taxon>Craniata</taxon>
        <taxon>Vertebrata</taxon>
        <taxon>Euteleostomi</taxon>
        <taxon>Lepidosauria</taxon>
        <taxon>Squamata</taxon>
        <taxon>Bifurcata</taxon>
        <taxon>Unidentata</taxon>
        <taxon>Episquamata</taxon>
        <taxon>Toxicofera</taxon>
        <taxon>Serpentes</taxon>
        <taxon>Colubroidea</taxon>
        <taxon>Viperidae</taxon>
        <taxon>Crotalinae</taxon>
        <taxon>Bothrops</taxon>
    </lineage>
</organism>
<name>VSP_BOTFO</name>
<sequence>IIGGDECNINEHRFL</sequence>
<protein>
    <recommendedName>
        <fullName>Snake venom serine protease</fullName>
        <shortName>SVSP</shortName>
        <ecNumber>3.4.21.-</ecNumber>
    </recommendedName>
</protein>
<evidence type="ECO:0000250" key="1"/>
<evidence type="ECO:0000255" key="2">
    <source>
        <dbReference type="PROSITE-ProRule" id="PRU00274"/>
    </source>
</evidence>
<feature type="chain" id="PRO_0000428816" description="Snake venom serine protease">
    <location>
        <begin position="1"/>
        <end position="15" status="greater than"/>
    </location>
</feature>
<feature type="disulfide bond" evidence="2">
    <location>
        <begin position="7"/>
        <end status="unknown"/>
    </location>
</feature>
<feature type="sequence variant">
    <original>I</original>
    <variation>V</variation>
    <location>
        <position position="1"/>
    </location>
</feature>
<feature type="sequence variant">
    <original>I</original>
    <variation>V</variation>
    <location>
        <position position="2"/>
    </location>
</feature>
<feature type="sequence variant">
    <original>F</original>
    <variation>S</variation>
    <location>
        <position position="14"/>
    </location>
</feature>
<feature type="non-terminal residue">
    <location>
        <position position="15"/>
    </location>
</feature>
<accession>P0DMH6</accession>
<dbReference type="EC" id="3.4.21.-"/>
<dbReference type="GO" id="GO:0005576">
    <property type="term" value="C:extracellular region"/>
    <property type="evidence" value="ECO:0007669"/>
    <property type="project" value="UniProtKB-SubCell"/>
</dbReference>
<dbReference type="GO" id="GO:0008236">
    <property type="term" value="F:serine-type peptidase activity"/>
    <property type="evidence" value="ECO:0007669"/>
    <property type="project" value="UniProtKB-KW"/>
</dbReference>
<dbReference type="GO" id="GO:0090729">
    <property type="term" value="F:toxin activity"/>
    <property type="evidence" value="ECO:0007669"/>
    <property type="project" value="UniProtKB-KW"/>
</dbReference>
<dbReference type="GO" id="GO:0006508">
    <property type="term" value="P:proteolysis"/>
    <property type="evidence" value="ECO:0007669"/>
    <property type="project" value="UniProtKB-KW"/>
</dbReference>
<reference key="1">
    <citation type="journal article" date="2008" name="J. Proteomics">
        <title>Snake venomics of the Brazilian pitvipers Bothrops cotiara and Bothrops fonsecai. Identification of taxonomy markers.</title>
        <authorList>
            <person name="Tashima A.K."/>
            <person name="Sanz L."/>
            <person name="Camargo A.C."/>
            <person name="Serrano S.M."/>
            <person name="Calvete J.J."/>
        </authorList>
    </citation>
    <scope>PROTEIN SEQUENCE</scope>
    <scope>IDENTIFICATION BY MASS SPECTROMETRY</scope>
    <source>
        <tissue>Venom</tissue>
    </source>
</reference>
<comment type="function">
    <text evidence="1">Snake venom serine protease that may act in the hemostasis system of the prey.</text>
</comment>
<comment type="subcellular location">
    <subcellularLocation>
        <location>Secreted</location>
    </subcellularLocation>
</comment>
<comment type="tissue specificity">
    <text>Expressed by the venom gland.</text>
</comment>
<comment type="PTM">
    <text evidence="1">Glycosylated.</text>
</comment>
<comment type="similarity">
    <text evidence="2">Belongs to the peptidase S1 family. Snake venom subfamily.</text>
</comment>
<keyword id="KW-0903">Direct protein sequencing</keyword>
<keyword id="KW-1015">Disulfide bond</keyword>
<keyword id="KW-0325">Glycoprotein</keyword>
<keyword id="KW-1199">Hemostasis impairing toxin</keyword>
<keyword id="KW-0378">Hydrolase</keyword>
<keyword id="KW-0645">Protease</keyword>
<keyword id="KW-0964">Secreted</keyword>
<keyword id="KW-0720">Serine protease</keyword>
<keyword id="KW-0800">Toxin</keyword>
<proteinExistence type="evidence at protein level"/>